<proteinExistence type="evidence at transcript level"/>
<keyword id="KW-0112">Calmodulin-binding</keyword>
<keyword id="KW-0963">Cytoplasm</keyword>
<keyword id="KW-0206">Cytoskeleton</keyword>
<keyword id="KW-0333">Golgi apparatus</keyword>
<keyword id="KW-0493">Microtubule</keyword>
<keyword id="KW-0597">Phosphoprotein</keyword>
<keyword id="KW-1185">Reference proteome</keyword>
<organism>
    <name type="scientific">Pan troglodytes</name>
    <name type="common">Chimpanzee</name>
    <dbReference type="NCBI Taxonomy" id="9598"/>
    <lineage>
        <taxon>Eukaryota</taxon>
        <taxon>Metazoa</taxon>
        <taxon>Chordata</taxon>
        <taxon>Craniata</taxon>
        <taxon>Vertebrata</taxon>
        <taxon>Euteleostomi</taxon>
        <taxon>Mammalia</taxon>
        <taxon>Eutheria</taxon>
        <taxon>Euarchontoglires</taxon>
        <taxon>Primates</taxon>
        <taxon>Haplorrhini</taxon>
        <taxon>Catarrhini</taxon>
        <taxon>Hominidae</taxon>
        <taxon>Pan</taxon>
    </lineage>
</organism>
<gene>
    <name type="primary">CDK5RAP2</name>
</gene>
<evidence type="ECO:0000250" key="1"/>
<evidence type="ECO:0000250" key="2">
    <source>
        <dbReference type="UniProtKB" id="Q8K389"/>
    </source>
</evidence>
<evidence type="ECO:0000250" key="3">
    <source>
        <dbReference type="UniProtKB" id="Q96SN8"/>
    </source>
</evidence>
<evidence type="ECO:0000250" key="4">
    <source>
        <dbReference type="UniProtKB" id="Q9JLH5"/>
    </source>
</evidence>
<evidence type="ECO:0000256" key="5">
    <source>
        <dbReference type="SAM" id="MobiDB-lite"/>
    </source>
</evidence>
<protein>
    <recommendedName>
        <fullName>CDK5 regulatory subunit-associated protein 2</fullName>
    </recommendedName>
</protein>
<dbReference type="EMBL" id="DQ430802">
    <property type="protein sequence ID" value="ABF83588.1"/>
    <property type="molecule type" value="mRNA"/>
</dbReference>
<dbReference type="RefSeq" id="NP_001035901.1">
    <property type="nucleotide sequence ID" value="NM_001042436.1"/>
</dbReference>
<dbReference type="FunCoup" id="Q19UN5">
    <property type="interactions" value="2136"/>
</dbReference>
<dbReference type="STRING" id="9598.ENSPTRP00000054333"/>
<dbReference type="PaxDb" id="9598-ENSPTRP00000054333"/>
<dbReference type="GeneID" id="464695"/>
<dbReference type="KEGG" id="ptr:464695"/>
<dbReference type="CTD" id="55755"/>
<dbReference type="eggNOG" id="ENOG502QTI7">
    <property type="taxonomic scope" value="Eukaryota"/>
</dbReference>
<dbReference type="InParanoid" id="Q19UN5"/>
<dbReference type="Proteomes" id="UP000002277">
    <property type="component" value="Unplaced"/>
</dbReference>
<dbReference type="GO" id="GO:0005813">
    <property type="term" value="C:centrosome"/>
    <property type="evidence" value="ECO:0000250"/>
    <property type="project" value="UniProtKB"/>
</dbReference>
<dbReference type="GO" id="GO:0005737">
    <property type="term" value="C:cytoplasm"/>
    <property type="evidence" value="ECO:0000250"/>
    <property type="project" value="UniProtKB"/>
</dbReference>
<dbReference type="GO" id="GO:0005794">
    <property type="term" value="C:Golgi apparatus"/>
    <property type="evidence" value="ECO:0000250"/>
    <property type="project" value="UniProtKB"/>
</dbReference>
<dbReference type="GO" id="GO:0005874">
    <property type="term" value="C:microtubule"/>
    <property type="evidence" value="ECO:0000250"/>
    <property type="project" value="UniProtKB"/>
</dbReference>
<dbReference type="GO" id="GO:0035371">
    <property type="term" value="C:microtubule plus-end"/>
    <property type="evidence" value="ECO:0000250"/>
    <property type="project" value="UniProtKB"/>
</dbReference>
<dbReference type="GO" id="GO:0097431">
    <property type="term" value="C:mitotic spindle pole"/>
    <property type="evidence" value="ECO:0000318"/>
    <property type="project" value="GO_Central"/>
</dbReference>
<dbReference type="GO" id="GO:0000242">
    <property type="term" value="C:pericentriolar material"/>
    <property type="evidence" value="ECO:0000250"/>
    <property type="project" value="UniProtKB"/>
</dbReference>
<dbReference type="GO" id="GO:0048471">
    <property type="term" value="C:perinuclear region of cytoplasm"/>
    <property type="evidence" value="ECO:0000250"/>
    <property type="project" value="UniProtKB"/>
</dbReference>
<dbReference type="GO" id="GO:0000922">
    <property type="term" value="C:spindle pole"/>
    <property type="evidence" value="ECO:0000250"/>
    <property type="project" value="UniProtKB"/>
</dbReference>
<dbReference type="GO" id="GO:0005516">
    <property type="term" value="F:calmodulin binding"/>
    <property type="evidence" value="ECO:0000250"/>
    <property type="project" value="UniProtKB"/>
</dbReference>
<dbReference type="GO" id="GO:0043015">
    <property type="term" value="F:gamma-tubulin binding"/>
    <property type="evidence" value="ECO:0000318"/>
    <property type="project" value="GO_Central"/>
</dbReference>
<dbReference type="GO" id="GO:0008017">
    <property type="term" value="F:microtubule binding"/>
    <property type="evidence" value="ECO:0000318"/>
    <property type="project" value="GO_Central"/>
</dbReference>
<dbReference type="GO" id="GO:0000976">
    <property type="term" value="F:transcription cis-regulatory region binding"/>
    <property type="evidence" value="ECO:0000250"/>
    <property type="project" value="UniProtKB"/>
</dbReference>
<dbReference type="GO" id="GO:0007420">
    <property type="term" value="P:brain development"/>
    <property type="evidence" value="ECO:0000250"/>
    <property type="project" value="UniProtKB"/>
</dbReference>
<dbReference type="GO" id="GO:0007099">
    <property type="term" value="P:centriole replication"/>
    <property type="evidence" value="ECO:0000318"/>
    <property type="project" value="GO_Central"/>
</dbReference>
<dbReference type="GO" id="GO:0007098">
    <property type="term" value="P:centrosome cycle"/>
    <property type="evidence" value="ECO:0000250"/>
    <property type="project" value="UniProtKB"/>
</dbReference>
<dbReference type="GO" id="GO:0007059">
    <property type="term" value="P:chromosome segregation"/>
    <property type="evidence" value="ECO:0000250"/>
    <property type="project" value="UniProtKB"/>
</dbReference>
<dbReference type="GO" id="GO:0000132">
    <property type="term" value="P:establishment of mitotic spindle orientation"/>
    <property type="evidence" value="ECO:0000250"/>
    <property type="project" value="UniProtKB"/>
</dbReference>
<dbReference type="GO" id="GO:0001578">
    <property type="term" value="P:microtubule bundle formation"/>
    <property type="evidence" value="ECO:0000250"/>
    <property type="project" value="UniProtKB"/>
</dbReference>
<dbReference type="GO" id="GO:0000226">
    <property type="term" value="P:microtubule cytoskeleton organization"/>
    <property type="evidence" value="ECO:0000250"/>
    <property type="project" value="UniProtKB"/>
</dbReference>
<dbReference type="GO" id="GO:0031023">
    <property type="term" value="P:microtubule organizing center organization"/>
    <property type="evidence" value="ECO:0000250"/>
    <property type="project" value="UniProtKB"/>
</dbReference>
<dbReference type="GO" id="GO:0046600">
    <property type="term" value="P:negative regulation of centriole replication"/>
    <property type="evidence" value="ECO:0000250"/>
    <property type="project" value="UniProtKB"/>
</dbReference>
<dbReference type="GO" id="GO:0022008">
    <property type="term" value="P:neurogenesis"/>
    <property type="evidence" value="ECO:0000250"/>
    <property type="project" value="UniProtKB"/>
</dbReference>
<dbReference type="GO" id="GO:0045893">
    <property type="term" value="P:positive regulation of DNA-templated transcription"/>
    <property type="evidence" value="ECO:0000250"/>
    <property type="project" value="UniProtKB"/>
</dbReference>
<dbReference type="GO" id="GO:0090266">
    <property type="term" value="P:regulation of mitotic cell cycle spindle assembly checkpoint"/>
    <property type="evidence" value="ECO:0000250"/>
    <property type="project" value="UniProtKB"/>
</dbReference>
<dbReference type="InterPro" id="IPR056273">
    <property type="entry name" value="CC_CDK5RAP2_MYOME"/>
</dbReference>
<dbReference type="InterPro" id="IPR042791">
    <property type="entry name" value="CDK5RAP2"/>
</dbReference>
<dbReference type="InterPro" id="IPR012943">
    <property type="entry name" value="Cnn_1N"/>
</dbReference>
<dbReference type="PANTHER" id="PTHR46930">
    <property type="entry name" value="CDK5 REGULATORY SUBUNIT-ASSOCIATED PROTEIN 2"/>
    <property type="match status" value="1"/>
</dbReference>
<dbReference type="PANTHER" id="PTHR46930:SF1">
    <property type="entry name" value="CDK5 REGULATORY SUBUNIT-ASSOCIATED PROTEIN 2"/>
    <property type="match status" value="1"/>
</dbReference>
<dbReference type="Pfam" id="PF23246">
    <property type="entry name" value="CC_CDK5RAP2"/>
    <property type="match status" value="1"/>
</dbReference>
<dbReference type="Pfam" id="PF07989">
    <property type="entry name" value="Cnn_1N"/>
    <property type="match status" value="1"/>
</dbReference>
<feature type="chain" id="PRO_0000251160" description="CDK5 regulatory subunit-associated protein 2">
    <location>
        <begin position="1"/>
        <end position="1893"/>
    </location>
</feature>
<feature type="region of interest" description="CM1 motif; interacts with the gTuRC" evidence="3">
    <location>
        <begin position="51"/>
        <end position="94"/>
    </location>
</feature>
<feature type="region of interest" description="Interaction with NCKAP5L" evidence="3">
    <location>
        <begin position="58"/>
        <end position="196"/>
    </location>
</feature>
<feature type="region of interest" description="Interaction with MAPRE1" evidence="1">
    <location>
        <begin position="926"/>
        <end position="1208"/>
    </location>
</feature>
<feature type="region of interest" description="Disordered" evidence="5">
    <location>
        <begin position="1015"/>
        <end position="1071"/>
    </location>
</feature>
<feature type="region of interest" description="Interaction with PCNT and AKAP9" evidence="1">
    <location>
        <begin position="1196"/>
        <end position="1893"/>
    </location>
</feature>
<feature type="region of interest" description="Disordered" evidence="5">
    <location>
        <begin position="1347"/>
        <end position="1381"/>
    </location>
</feature>
<feature type="region of interest" description="Disordered" evidence="5">
    <location>
        <begin position="1467"/>
        <end position="1486"/>
    </location>
</feature>
<feature type="region of interest" description="Disordered" evidence="5">
    <location>
        <begin position="1500"/>
        <end position="1521"/>
    </location>
</feature>
<feature type="region of interest" description="Disordered" evidence="5">
    <location>
        <begin position="1675"/>
        <end position="1706"/>
    </location>
</feature>
<feature type="region of interest" description="Interaction with CDK5R1" evidence="1">
    <location>
        <begin position="1726"/>
        <end position="1768"/>
    </location>
</feature>
<feature type="region of interest" description="Disordered" evidence="5">
    <location>
        <begin position="1752"/>
        <end position="1774"/>
    </location>
</feature>
<feature type="region of interest" description="Required for centrosomal attachment, Golgi localization and CALM1 interaction" evidence="1">
    <location>
        <begin position="1861"/>
        <end position="1870"/>
    </location>
</feature>
<feature type="region of interest" description="Disordered" evidence="5">
    <location>
        <begin position="1874"/>
        <end position="1893"/>
    </location>
</feature>
<feature type="compositionally biased region" description="Basic and acidic residues" evidence="5">
    <location>
        <begin position="1469"/>
        <end position="1486"/>
    </location>
</feature>
<feature type="compositionally biased region" description="Basic and acidic residues" evidence="5">
    <location>
        <begin position="1500"/>
        <end position="1519"/>
    </location>
</feature>
<feature type="compositionally biased region" description="Polar residues" evidence="5">
    <location>
        <begin position="1753"/>
        <end position="1766"/>
    </location>
</feature>
<feature type="compositionally biased region" description="Polar residues" evidence="5">
    <location>
        <begin position="1884"/>
        <end position="1893"/>
    </location>
</feature>
<feature type="modified residue" description="Phosphoserine" evidence="3">
    <location>
        <position position="547"/>
    </location>
</feature>
<feature type="modified residue" description="Phosphothreonine" evidence="3">
    <location>
        <position position="1001"/>
    </location>
</feature>
<feature type="modified residue" description="Phosphoserine" evidence="3">
    <location>
        <position position="1238"/>
    </location>
</feature>
<feature type="modified residue" description="Phosphoserine" evidence="3">
    <location>
        <position position="1490"/>
    </location>
</feature>
<feature type="modified residue" description="Phosphoserine" evidence="4">
    <location>
        <position position="1663"/>
    </location>
</feature>
<feature type="modified residue" description="Phosphoserine" evidence="4">
    <location>
        <position position="1666"/>
    </location>
</feature>
<feature type="modified residue" description="Phosphoserine" evidence="3">
    <location>
        <position position="1893"/>
    </location>
</feature>
<accession>Q19UN5</accession>
<sequence>MMDSVLEEDVTVPGTLSGCSGLVPSVPDDLDGINPNAGLGNGVLPNVSEETVSPTRARNMKDFENQITELKKENFNLKLRIYFLEERMQQEFHGPTEHIYKTNIELKVEVESLKRELQEREQLLIKASKAVESLAEAGGSEIQRVKEDARKKVQQVEDLLTKRILLLEKDVTAAQAELEKAFAGTETEKALRLRLESKLSEMKKMHEGDLAMALVLDEKDRLIEELKLSLKSKEALIQCLKEEKSQMASPDENVSSGELRGLCAAPREEKXRETEAAQMEHQKERNSFEERIQALEEDLREKEREIATEKKNSLKRDKAIQGLTMALKSKEKXVEELNSEIEKLXAAFAKAREALQKAQTQEFQGSEDYETALSGKEALSAALRSQNLTKSTENHRLRRSIKKITQELSDLQQERERLEKDLEEAHREKSKGDCTIRDLRNEVEKLRNEVNEREKAMENRYKSLLSESNKKLHNQEQVVKHLTESTNQKDVLLQKFNEKDLEVIQQNHYLMAAEDLELRSESLITEKCSSQQPPGSKTIFSKEKKQSSDYEELIQVLKKEQDIYTHLVKSLQESDSINNLQAELNNIFALRKQLEQDVLSYQNLRKTLEEQISXIRRREEESFSLYSDQTSYLSICLEENNRFQVEHFSQEELKKKVSDLIQLVKELYTDNQHLKKTIFDLSCMGFQGNGFPDRLASTEQTELLASKEDEDTIKIGEDDEINFLSDEHLQQSNEIMKDLSKGGCKNGYLRHTESKISDCDGAHAPGCLEEGAFINLLAPLFNEKATLLLESRPDLLKVVRELLLGQLFLTEQEVSGEHLDGKTEKTPKQKGELVHFVQTNSFSKPHDELKLSCEAQLVKAGEVPKVGLKDASVQTVATEGDLLRFKHEATREAWEEKPINTALSAEHRPENLHGVPGWQAALLSLPGVTNREAKKSRLPILIKPSRSLGNMYRLPATQEVVTQLQSQILELQGELKEFKTCNKQLHQKLILAEAVMEGRPTPDKTLLNAQPPVGAAYQDSPGEQKGIKTTSSVWRDKEMDSDQQTSYEIDSEICPPDDLASLPSCKENPEDVLSPTSVATYLSSKSQPSAKVSVMGTDQSESINTSNETEYLKQKIHDLETELEAYQNFIFQLQKHSQCSEAIITVLCGTEGAQDGLSKPKSGSDGEEMTFSSLHQVRYVKHVKILGPLAPEMIDSRVLENLKQQLEEQEYKLQKEQNLNMQLFSEIHNLQNKFRDLSPPRYDSLVQSQARELSLQRQQIKDGHGICVISRQHMNTMIKAFEELLQASDVDYCVAEGFQEQLNQCAELLEKLEKLFLNGKSVGVEMNTQIELMERIEEDNLTYQHLLPESPEPSASHALSDYETSEKSFFSQDQKQDNETEKTSVMVNNFSQDLLMEHIQEIRTLRKRLEESIKTNEKLRKQLERQGSEFDQGSTNIFASGSELHSSLTSEIHFLRKQNQALNAMLIKGSRDKQKENDKLRESLSRKTVSLEHLQREYASVKEENERLQKEGSEKERHNQQLIQEVRCSGQELSRVQEEVKLRQQLLSQNDKLLQSLRVELKAYEKLDEEHRRLREASGEGWKGQDPFRDLHSLLMEIQALRLQLERSIETSSTLQGRLEEQLARGAEKAQEGALTLAVQAVSIPEVPLQLDKHDGDKYPMESDNSFDLFDSSQAVTPKSVSETPPLSGNDTDSLSCDSGSSATSTPCVSRLVTGHHLWASKNGRHVLGLIEDYEALLKQISQGQRLLAEMDVQTQEAPSSTSQELGTKGPHPAPLSKFVSSVSTAKLTLEEAYRRLKLLWRVSLPEDGQCPLHCEQIGEMKAEVTKLHKKLFEQEKKLQNTMKLLQLSKRQEKVIFDQLVVTHKILRKARGNLELRPGGSHPGTCSPSRPGS</sequence>
<name>CK5P2_PANTR</name>
<reference key="1">
    <citation type="journal article" date="2006" name="Gene">
        <title>Molecular evolution of the brain size regulator genes CDK5RAP2 and CENPJ.</title>
        <authorList>
            <person name="Evans P.D."/>
            <person name="Vallender E.J."/>
            <person name="Lahn B.T."/>
        </authorList>
    </citation>
    <scope>NUCLEOTIDE SEQUENCE [MRNA]</scope>
</reference>
<comment type="function">
    <text evidence="2 3">Potential regulator of CDK5 activity via its interaction with CDK5R1 (By similarity). Negative regulator of centriole disengagement (licensing) which maintains centriole engagement and cohesion. Involved in regulation of mitotic spindle orientation (By similarity). Plays a role in the spindle checkpoint activation by acting as a transcriptional regulator of both BUBR1 and MAD2 promoter (By similarity). Together with EB1/MAPRE1, may promote microtubule polymerization, bundle formation, growth and dynamics at the plus ends (By similarity). Regulates centrosomal maturation by recruitment of the gamma-tubulin ring complex (gTuRC) onto centrosomes (By similarity). In complex with PDE4DIP isoform 13/MMG8/SMYLE, MAPRE1 and AKAP9, contributes to microtubules nucleation and extension from the centrosome to the cell periphery (By similarity). Required for the recruitment of AKAP9 to centrosomes (By similarity). Plays a role in neurogenesis (By similarity).</text>
</comment>
<comment type="subunit">
    <text evidence="3 4">Homodimer (By similarity). Interacts with CDK5R1 (p35 form) (By similarity). CDK5RAP1, CDK5RAP2 and CDK5RAP3 show competitive binding to CDK5R1 (By similarity). May form a complex with CDK5R1 and CDK5 (By similarity). Interacts with pericentrin/PCNT; the interaction is leading to centrosomal and Golgi localization of CDK5RAP2 and PCNT (By similarity). Interacts with AKAP9; the interaction targets CDK5RAP2 and AKAP9 to Golgi apparatus (By similarity). Interacts with MAPRE1; the interaction is direct and targets CDK5RAP2 and EB1/MAPRE1 to microtubule plus ends (By similarity). Interacts with TUBG1; the interaction is leading to the centrosomal localization of CDK5RAP2 and TUBG1 (By similarity). Interacts with TUBGCP3 (By similarity). Interacts with CALM1 (By similarity). Interacts with CDC20 (By similarity). Interacts with CEP68; degradation of CEP68 in early mitosis leads to removal of CDK5RAP2 from the centrosome which promotes centriole disengagement and subsequent centriole separation (By similarity). Interacts with NCKAP5L (By similarity). Forms a pericentrosomal complex with AKAP9, MAPRE1 and PDE4DIP isoform 13/MMG8/SMYLE; within this complex, MAPRE1 binding to CDK5RAP2 may be mediated by PDE4DIP (By similarity). Interacts with LGALS3BP; this interaction may connect the pericentrosomal complex to the gamma-tubulin ring complex (gTuRC) to promote microtubule assembly and acetylation (By similarity). Interacts with CCDC66 (By similarity). Associates (via CM1 motif) with TUBGCP2 of the gTuRC; the interaction plays a role in gTuRC activation (By similarity).</text>
</comment>
<comment type="subcellular location">
    <subcellularLocation>
        <location evidence="3">Cytoplasm</location>
        <location evidence="3">Cytoskeleton</location>
        <location evidence="3">Microtubule organizing center</location>
        <location evidence="3">Centrosome</location>
    </subcellularLocation>
    <subcellularLocation>
        <location evidence="3">Golgi apparatus</location>
    </subcellularLocation>
    <subcellularLocation>
        <location evidence="3">Cytoplasm</location>
    </subcellularLocation>
    <subcellularLocation>
        <location evidence="3">Cytoplasm</location>
        <location evidence="3">Cytoskeleton</location>
    </subcellularLocation>
    <text evidence="3">Found in the pericentriolar region adhering to the surface of the centrosome and in the region of the centrosomal appendages. Localizes to microtubule plus ends in the presence of EB1/MAPRE1. Localization to centrosomes versus Golgi apparatus may be cell type-dependent.</text>
</comment>
<comment type="PTM">
    <text evidence="4">Phosphorylated in vitro by CDK5.</text>
</comment>